<proteinExistence type="inferred from homology"/>
<sequence length="116" mass="13337">MRHKHGYRKLSRTSSHRKALLKNLAIAIIEREKIETTVPKAKELKRYIERLVTVARNADFNTHRQVFAALQSKEATKKLINEIAPKYEGRNGGYTSIVKTRIRKGDATPMAFISFI</sequence>
<name>RL17_ALIB4</name>
<accession>A8ETK7</accession>
<organism>
    <name type="scientific">Aliarcobacter butzleri (strain RM4018)</name>
    <name type="common">Arcobacter butzleri</name>
    <dbReference type="NCBI Taxonomy" id="367737"/>
    <lineage>
        <taxon>Bacteria</taxon>
        <taxon>Pseudomonadati</taxon>
        <taxon>Campylobacterota</taxon>
        <taxon>Epsilonproteobacteria</taxon>
        <taxon>Campylobacterales</taxon>
        <taxon>Arcobacteraceae</taxon>
        <taxon>Aliarcobacter</taxon>
    </lineage>
</organism>
<evidence type="ECO:0000255" key="1">
    <source>
        <dbReference type="HAMAP-Rule" id="MF_01368"/>
    </source>
</evidence>
<evidence type="ECO:0000305" key="2"/>
<comment type="subunit">
    <text evidence="1">Part of the 50S ribosomal subunit. Contacts protein L32.</text>
</comment>
<comment type="similarity">
    <text evidence="1">Belongs to the bacterial ribosomal protein bL17 family.</text>
</comment>
<keyword id="KW-1185">Reference proteome</keyword>
<keyword id="KW-0687">Ribonucleoprotein</keyword>
<keyword id="KW-0689">Ribosomal protein</keyword>
<protein>
    <recommendedName>
        <fullName evidence="1">Large ribosomal subunit protein bL17</fullName>
    </recommendedName>
    <alternativeName>
        <fullName evidence="2">50S ribosomal protein L17</fullName>
    </alternativeName>
</protein>
<feature type="chain" id="PRO_1000068016" description="Large ribosomal subunit protein bL17">
    <location>
        <begin position="1"/>
        <end position="116"/>
    </location>
</feature>
<gene>
    <name evidence="1" type="primary">rplQ</name>
    <name type="ordered locus">Abu_1021</name>
</gene>
<reference key="1">
    <citation type="journal article" date="2007" name="PLoS ONE">
        <title>The complete genome sequence and analysis of the Epsilonproteobacterium Arcobacter butzleri.</title>
        <authorList>
            <person name="Miller W.G."/>
            <person name="Parker C.T."/>
            <person name="Rubenfield M."/>
            <person name="Mendz G.L."/>
            <person name="Woesten M.M.S.M."/>
            <person name="Ussery D.W."/>
            <person name="Stolz J.F."/>
            <person name="Binnewies T.T."/>
            <person name="Hallin P.F."/>
            <person name="Wang G."/>
            <person name="Malek J.A."/>
            <person name="Rogosin A."/>
            <person name="Stanker L.H."/>
            <person name="Mandrell R.E."/>
        </authorList>
    </citation>
    <scope>NUCLEOTIDE SEQUENCE [LARGE SCALE GENOMIC DNA]</scope>
    <source>
        <strain>RM4018</strain>
    </source>
</reference>
<dbReference type="EMBL" id="CP000361">
    <property type="protein sequence ID" value="ABV67281.1"/>
    <property type="molecule type" value="Genomic_DNA"/>
</dbReference>
<dbReference type="RefSeq" id="WP_004509210.1">
    <property type="nucleotide sequence ID" value="NC_009850.1"/>
</dbReference>
<dbReference type="SMR" id="A8ETK7"/>
<dbReference type="STRING" id="367737.Abu_1021"/>
<dbReference type="GeneID" id="24303818"/>
<dbReference type="KEGG" id="abu:Abu_1021"/>
<dbReference type="eggNOG" id="COG0203">
    <property type="taxonomic scope" value="Bacteria"/>
</dbReference>
<dbReference type="HOGENOM" id="CLU_074407_2_0_7"/>
<dbReference type="Proteomes" id="UP000001136">
    <property type="component" value="Chromosome"/>
</dbReference>
<dbReference type="GO" id="GO:0022625">
    <property type="term" value="C:cytosolic large ribosomal subunit"/>
    <property type="evidence" value="ECO:0007669"/>
    <property type="project" value="TreeGrafter"/>
</dbReference>
<dbReference type="GO" id="GO:0003735">
    <property type="term" value="F:structural constituent of ribosome"/>
    <property type="evidence" value="ECO:0007669"/>
    <property type="project" value="InterPro"/>
</dbReference>
<dbReference type="GO" id="GO:0006412">
    <property type="term" value="P:translation"/>
    <property type="evidence" value="ECO:0007669"/>
    <property type="project" value="UniProtKB-UniRule"/>
</dbReference>
<dbReference type="Gene3D" id="3.90.1030.10">
    <property type="entry name" value="Ribosomal protein L17"/>
    <property type="match status" value="1"/>
</dbReference>
<dbReference type="HAMAP" id="MF_01368">
    <property type="entry name" value="Ribosomal_bL17"/>
    <property type="match status" value="1"/>
</dbReference>
<dbReference type="InterPro" id="IPR000456">
    <property type="entry name" value="Ribosomal_bL17"/>
</dbReference>
<dbReference type="InterPro" id="IPR047859">
    <property type="entry name" value="Ribosomal_bL17_CS"/>
</dbReference>
<dbReference type="InterPro" id="IPR036373">
    <property type="entry name" value="Ribosomal_bL17_sf"/>
</dbReference>
<dbReference type="NCBIfam" id="TIGR00059">
    <property type="entry name" value="L17"/>
    <property type="match status" value="1"/>
</dbReference>
<dbReference type="PANTHER" id="PTHR14413:SF16">
    <property type="entry name" value="LARGE RIBOSOMAL SUBUNIT PROTEIN BL17M"/>
    <property type="match status" value="1"/>
</dbReference>
<dbReference type="PANTHER" id="PTHR14413">
    <property type="entry name" value="RIBOSOMAL PROTEIN L17"/>
    <property type="match status" value="1"/>
</dbReference>
<dbReference type="Pfam" id="PF01196">
    <property type="entry name" value="Ribosomal_L17"/>
    <property type="match status" value="1"/>
</dbReference>
<dbReference type="SUPFAM" id="SSF64263">
    <property type="entry name" value="Prokaryotic ribosomal protein L17"/>
    <property type="match status" value="1"/>
</dbReference>
<dbReference type="PROSITE" id="PS01167">
    <property type="entry name" value="RIBOSOMAL_L17"/>
    <property type="match status" value="1"/>
</dbReference>